<protein>
    <recommendedName>
        <fullName>LOB domain-containing protein 12</fullName>
    </recommendedName>
    <alternativeName>
        <fullName>ASYMMETRIC LEAVES 2-like protein 5</fullName>
        <shortName>AS2-like protein 5</shortName>
    </alternativeName>
</protein>
<comment type="interaction">
    <interactant intactId="EBI-15198991">
        <id>Q8LBW3</id>
    </interactant>
    <interactant intactId="EBI-15193325">
        <id>A0A1P8AWD1</id>
        <label>At1g04445</label>
    </interactant>
    <organismsDiffer>false</organismsDiffer>
    <experiments>3</experiments>
</comment>
<comment type="interaction">
    <interactant intactId="EBI-15198991">
        <id>Q8LBW3</id>
    </interactant>
    <interactant intactId="EBI-15191587">
        <id>F4K1A8</id>
        <label>At5g26749</label>
    </interactant>
    <organismsDiffer>false</organismsDiffer>
    <experiments>3</experiments>
</comment>
<comment type="interaction">
    <interactant intactId="EBI-15198991">
        <id>Q8LBW3</id>
    </interactant>
    <interactant intactId="EBI-15192431">
        <id>A0A178VFA3</id>
        <label>AXX17_At3g20260</label>
    </interactant>
    <organismsDiffer>false</organismsDiffer>
    <experiments>3</experiments>
</comment>
<comment type="interaction">
    <interactant intactId="EBI-15198991">
        <id>Q8LBW3</id>
    </interactant>
    <interactant intactId="EBI-4432427">
        <id>Q9AT61</id>
        <label>LBD13</label>
    </interactant>
    <organismsDiffer>false</organismsDiffer>
    <experiments>3</experiments>
</comment>
<comment type="interaction">
    <interactant intactId="EBI-15198991">
        <id>Q8LBW3</id>
    </interactant>
    <interactant intactId="EBI-15193845">
        <id>P59467</id>
        <label>LBD23</label>
    </interactant>
    <organismsDiffer>false</organismsDiffer>
    <experiments>3</experiments>
</comment>
<comment type="tissue specificity">
    <text evidence="2">Expressed predominantly in roots, and at low levels in shoots, floral stems and open flowers.</text>
</comment>
<comment type="miscellaneous">
    <text>Gain-of-function mutant pck1-D (T-DNA tagging) shows highly epinastic leaves, reduced apical dominance and sterility.</text>
</comment>
<comment type="similarity">
    <text evidence="3">Belongs to the LOB domain-containing protein family.</text>
</comment>
<evidence type="ECO:0000255" key="1">
    <source>
        <dbReference type="PROSITE-ProRule" id="PRU00291"/>
    </source>
</evidence>
<evidence type="ECO:0000269" key="2">
    <source>
    </source>
</evidence>
<evidence type="ECO:0000305" key="3"/>
<sequence>MGGPGSSPCASCKLLRRRCAKDCIFAPYFPPDDPHKFAIVHKVFGASNVSKMLQELPVHQRADAVNSLVFEANARVRDPVYGCVGAISYLQNQVSQLQMQLAVAQAEILCIQMQNEPTLQSHHQVLELDQDHKALLLNNNNINNCNTNNNNNNFGYAMSSGQFNSNFASPSSIMQMQMQMQMQDPLKQESLWT</sequence>
<dbReference type="EMBL" id="AB164306">
    <property type="protein sequence ID" value="BAD12425.1"/>
    <property type="molecule type" value="mRNA"/>
</dbReference>
<dbReference type="EMBL" id="AB473838">
    <property type="protein sequence ID" value="BAH10549.1"/>
    <property type="molecule type" value="mRNA"/>
</dbReference>
<dbReference type="EMBL" id="AC004165">
    <property type="protein sequence ID" value="AAC16959.1"/>
    <property type="molecule type" value="Genomic_DNA"/>
</dbReference>
<dbReference type="EMBL" id="CP002685">
    <property type="protein sequence ID" value="AEC08349.1"/>
    <property type="molecule type" value="Genomic_DNA"/>
</dbReference>
<dbReference type="EMBL" id="AY086960">
    <property type="protein sequence ID" value="AAM64523.1"/>
    <property type="molecule type" value="mRNA"/>
</dbReference>
<dbReference type="PIR" id="T00585">
    <property type="entry name" value="T00585"/>
</dbReference>
<dbReference type="RefSeq" id="NP_565695.1">
    <property type="nucleotide sequence ID" value="NM_128568.2"/>
</dbReference>
<dbReference type="SMR" id="Q8LBW3"/>
<dbReference type="BioGRID" id="2914">
    <property type="interactions" value="19"/>
</dbReference>
<dbReference type="IntAct" id="Q8LBW3">
    <property type="interactions" value="17"/>
</dbReference>
<dbReference type="STRING" id="3702.Q8LBW3"/>
<dbReference type="PaxDb" id="3702-AT2G30130.1"/>
<dbReference type="ProteomicsDB" id="250730"/>
<dbReference type="EnsemblPlants" id="AT2G30130.1">
    <property type="protein sequence ID" value="AT2G30130.1"/>
    <property type="gene ID" value="AT2G30130"/>
</dbReference>
<dbReference type="GeneID" id="817565"/>
<dbReference type="Gramene" id="AT2G30130.1">
    <property type="protein sequence ID" value="AT2G30130.1"/>
    <property type="gene ID" value="AT2G30130"/>
</dbReference>
<dbReference type="KEGG" id="ath:AT2G30130"/>
<dbReference type="Araport" id="AT2G30130"/>
<dbReference type="TAIR" id="AT2G30130">
    <property type="gene designation" value="ASL5"/>
</dbReference>
<dbReference type="eggNOG" id="ENOG502RXPJ">
    <property type="taxonomic scope" value="Eukaryota"/>
</dbReference>
<dbReference type="HOGENOM" id="CLU_058353_5_0_1"/>
<dbReference type="InParanoid" id="Q8LBW3"/>
<dbReference type="OMA" id="MQNEPTL"/>
<dbReference type="OrthoDB" id="2020166at2759"/>
<dbReference type="PhylomeDB" id="Q8LBW3"/>
<dbReference type="PRO" id="PR:Q8LBW3"/>
<dbReference type="Proteomes" id="UP000006548">
    <property type="component" value="Chromosome 2"/>
</dbReference>
<dbReference type="ExpressionAtlas" id="Q8LBW3">
    <property type="expression patterns" value="baseline and differential"/>
</dbReference>
<dbReference type="GO" id="GO:0003677">
    <property type="term" value="F:DNA binding"/>
    <property type="evidence" value="ECO:0000304"/>
    <property type="project" value="TAIR"/>
</dbReference>
<dbReference type="GO" id="GO:0009965">
    <property type="term" value="P:leaf morphogenesis"/>
    <property type="evidence" value="ECO:0000315"/>
    <property type="project" value="TAIR"/>
</dbReference>
<dbReference type="GO" id="GO:0010016">
    <property type="term" value="P:shoot system morphogenesis"/>
    <property type="evidence" value="ECO:0000315"/>
    <property type="project" value="TAIR"/>
</dbReference>
<dbReference type="InterPro" id="IPR004883">
    <property type="entry name" value="LOB"/>
</dbReference>
<dbReference type="PANTHER" id="PTHR31301:SF15">
    <property type="entry name" value="LOB DOMAIN-CONTAINING PROTEIN 12"/>
    <property type="match status" value="1"/>
</dbReference>
<dbReference type="PANTHER" id="PTHR31301">
    <property type="entry name" value="LOB DOMAIN-CONTAINING PROTEIN 4-RELATED"/>
    <property type="match status" value="1"/>
</dbReference>
<dbReference type="Pfam" id="PF03195">
    <property type="entry name" value="LOB"/>
    <property type="match status" value="1"/>
</dbReference>
<dbReference type="PROSITE" id="PS50891">
    <property type="entry name" value="LOB"/>
    <property type="match status" value="1"/>
</dbReference>
<name>LBD12_ARATH</name>
<gene>
    <name type="primary">LBD12</name>
    <name type="synonym">ASL5</name>
    <name type="ordered locus">At2g30130</name>
    <name type="ORF">T27E13.13</name>
</gene>
<feature type="chain" id="PRO_0000132263" description="LOB domain-containing protein 12">
    <location>
        <begin position="1"/>
        <end position="193"/>
    </location>
</feature>
<feature type="domain" description="LOB" evidence="1">
    <location>
        <begin position="7"/>
        <end position="108"/>
    </location>
</feature>
<feature type="sequence conflict" description="In Ref. 5; AAM64523." evidence="3" ref="5">
    <original>F</original>
    <variation>L</variation>
    <location>
        <position position="25"/>
    </location>
</feature>
<organism>
    <name type="scientific">Arabidopsis thaliana</name>
    <name type="common">Mouse-ear cress</name>
    <dbReference type="NCBI Taxonomy" id="3702"/>
    <lineage>
        <taxon>Eukaryota</taxon>
        <taxon>Viridiplantae</taxon>
        <taxon>Streptophyta</taxon>
        <taxon>Embryophyta</taxon>
        <taxon>Tracheophyta</taxon>
        <taxon>Spermatophyta</taxon>
        <taxon>Magnoliopsida</taxon>
        <taxon>eudicotyledons</taxon>
        <taxon>Gunneridae</taxon>
        <taxon>Pentapetalae</taxon>
        <taxon>rosids</taxon>
        <taxon>malvids</taxon>
        <taxon>Brassicales</taxon>
        <taxon>Brassicaceae</taxon>
        <taxon>Camelineae</taxon>
        <taxon>Arabidopsis</taxon>
    </lineage>
</organism>
<accession>Q8LBW3</accession>
<accession>B7XG59</accession>
<accession>O64734</accession>
<accession>Q549W5</accession>
<keyword id="KW-1185">Reference proteome</keyword>
<proteinExistence type="evidence at protein level"/>
<reference key="1">
    <citation type="journal article" date="2002" name="Plant Cell Physiol.">
        <title>The ASYMMETRIC LEAVES2 gene of Arabidopsis thaliana, required for formation of a symmetric flat leaf lamina, encodes a member of a novel family of proteins characterized by cysteine repeats and a leucine zipper.</title>
        <authorList>
            <person name="Iwakawa H."/>
            <person name="Ueno Y."/>
            <person name="Semiarti E."/>
            <person name="Onouchi H."/>
            <person name="Kojima S."/>
            <person name="Tsukaya H."/>
            <person name="Hasebe M."/>
            <person name="Soma T."/>
            <person name="Ikezaki M."/>
            <person name="Machida C."/>
            <person name="Machida Y."/>
        </authorList>
    </citation>
    <scope>NUCLEOTIDE SEQUENCE [MRNA]</scope>
    <scope>GENE FAMILY</scope>
    <scope>NOMENCLATURE</scope>
</reference>
<reference key="2">
    <citation type="journal article" date="2009" name="Plant J.">
        <title>Characterization of genes in the ASYMMETRIC LEAVES2/LATERAL ORGAN BOUNDARIES (AS2/LOB) family in Arabidopsis thaliana, and functional and molecular comparisons between AS2 and other family members.</title>
        <authorList>
            <person name="Matsumura Y."/>
            <person name="Iwakawa H."/>
            <person name="Machida Y."/>
            <person name="Machida C."/>
        </authorList>
    </citation>
    <scope>NUCLEOTIDE SEQUENCE [MRNA]</scope>
    <source>
        <strain>cv. Columbia</strain>
    </source>
</reference>
<reference key="3">
    <citation type="journal article" date="1999" name="Nature">
        <title>Sequence and analysis of chromosome 2 of the plant Arabidopsis thaliana.</title>
        <authorList>
            <person name="Lin X."/>
            <person name="Kaul S."/>
            <person name="Rounsley S.D."/>
            <person name="Shea T.P."/>
            <person name="Benito M.-I."/>
            <person name="Town C.D."/>
            <person name="Fujii C.Y."/>
            <person name="Mason T.M."/>
            <person name="Bowman C.L."/>
            <person name="Barnstead M.E."/>
            <person name="Feldblyum T.V."/>
            <person name="Buell C.R."/>
            <person name="Ketchum K.A."/>
            <person name="Lee J.J."/>
            <person name="Ronning C.M."/>
            <person name="Koo H.L."/>
            <person name="Moffat K.S."/>
            <person name="Cronin L.A."/>
            <person name="Shen M."/>
            <person name="Pai G."/>
            <person name="Van Aken S."/>
            <person name="Umayam L."/>
            <person name="Tallon L.J."/>
            <person name="Gill J.E."/>
            <person name="Adams M.D."/>
            <person name="Carrera A.J."/>
            <person name="Creasy T.H."/>
            <person name="Goodman H.M."/>
            <person name="Somerville C.R."/>
            <person name="Copenhaver G.P."/>
            <person name="Preuss D."/>
            <person name="Nierman W.C."/>
            <person name="White O."/>
            <person name="Eisen J.A."/>
            <person name="Salzberg S.L."/>
            <person name="Fraser C.M."/>
            <person name="Venter J.C."/>
        </authorList>
    </citation>
    <scope>NUCLEOTIDE SEQUENCE [LARGE SCALE GENOMIC DNA]</scope>
    <source>
        <strain>cv. Columbia</strain>
    </source>
</reference>
<reference key="4">
    <citation type="journal article" date="2017" name="Plant J.">
        <title>Araport11: a complete reannotation of the Arabidopsis thaliana reference genome.</title>
        <authorList>
            <person name="Cheng C.Y."/>
            <person name="Krishnakumar V."/>
            <person name="Chan A.P."/>
            <person name="Thibaud-Nissen F."/>
            <person name="Schobel S."/>
            <person name="Town C.D."/>
        </authorList>
    </citation>
    <scope>GENOME REANNOTATION</scope>
    <source>
        <strain>cv. Columbia</strain>
    </source>
</reference>
<reference key="5">
    <citation type="submission" date="2002-03" db="EMBL/GenBank/DDBJ databases">
        <title>Full-length cDNA from Arabidopsis thaliana.</title>
        <authorList>
            <person name="Brover V.V."/>
            <person name="Troukhan M.E."/>
            <person name="Alexandrov N.A."/>
            <person name="Lu Y.-P."/>
            <person name="Flavell R.B."/>
            <person name="Feldmann K.A."/>
        </authorList>
    </citation>
    <scope>NUCLEOTIDE SEQUENCE [LARGE SCALE MRNA]</scope>
</reference>
<reference key="6">
    <citation type="journal article" date="2002" name="Plant Physiol.">
        <title>The LATERAL ORGAN BOUNDARIES gene defines a novel, plant-specific gene family.</title>
        <authorList>
            <person name="Shuai B."/>
            <person name="Reynaga-Pena C.G."/>
            <person name="Springer P.S."/>
        </authorList>
    </citation>
    <scope>TISSUE SPECIFICITY</scope>
    <scope>GENE FAMILY</scope>
    <scope>NOMENCLATURE</scope>
</reference>
<reference key="7">
    <citation type="journal article" date="2003" name="Plant J.">
        <title>Activation tagging, a novel tool to dissect the functions of a gene family.</title>
        <authorList>
            <person name="Nakazawa M."/>
            <person name="Ichikawa T."/>
            <person name="Ishikawa A."/>
            <person name="Kobayashi H."/>
            <person name="Tsuhara Y."/>
            <person name="Kawashima M."/>
            <person name="Suzuki K."/>
            <person name="Muto S."/>
            <person name="Matsui M."/>
        </authorList>
    </citation>
    <scope>FUNCTION</scope>
</reference>